<comment type="function">
    <text evidence="1 5">Component of the kinetochore, a multiprotein complex that assembles on centromeric DNA and attaches chromosomes to spindle microtubules, mediating chromosome segregation and sister chromatid segregation during meiosis and mitosis (By similarity). Component of the inner kinetochore COMA subcomplex, which connects centromere-associated proteins and the outer kinetochore (PubMed:29046335). COMA interacts with other inner kinetochore proteins to form the inner kinetochore constitutive centromere-associated network (CCAN), which serves as a structural platform for outer kinetochore assembly (By similarity).</text>
</comment>
<comment type="subunit">
    <text evidence="1 4 5">Component of the heterotetrameric kinetochore subcomplex COMA, which consists of AME1, CTF19, MCM21 and OKP1 (PubMed:22322944, PubMed:29046335). The COMA subcomplex is part of a larger constitutive centromere-associated network (CCAN) (also known as central kinetochore CTF19 complex in yeast), which is composed of at least AME1, CHL4, CTF3, CTF19, IML3, MCM16, MCM21, MCM22, NKP1, NKP2 and OKP1 (By similarity). COMA binds the centromeric nucleosome-binding protein MIF2, and to the outer kinetochore MIND subcomplex (PubMed:29046335).</text>
</comment>
<comment type="interaction">
    <interactant intactId="EBI-7692007">
        <id>Q6CRN7</id>
    </interactant>
    <interactant intactId="EBI-7692022">
        <id>Q6CVQ9</id>
        <label>MCM21</label>
    </interactant>
    <organismsDiffer>false</organismsDiffer>
    <experiments>3</experiments>
</comment>
<comment type="subcellular location">
    <subcellularLocation>
        <location evidence="1">Nucleus</location>
    </subcellularLocation>
    <subcellularLocation>
        <location evidence="1">Chromosome</location>
        <location evidence="1">Centromere</location>
        <location evidence="1">Kinetochore</location>
    </subcellularLocation>
</comment>
<comment type="domain">
    <text evidence="4">The D-RWD region contains a double-RWD domain which is involved in the interaction with other kinetochore proteins.</text>
</comment>
<comment type="similarity">
    <text evidence="6">Belongs to the CENP-P/CTF19 family.</text>
</comment>
<keyword id="KW-0002">3D-structure</keyword>
<keyword id="KW-0131">Cell cycle</keyword>
<keyword id="KW-0132">Cell division</keyword>
<keyword id="KW-0137">Centromere</keyword>
<keyword id="KW-0158">Chromosome</keyword>
<keyword id="KW-0175">Coiled coil</keyword>
<keyword id="KW-0995">Kinetochore</keyword>
<keyword id="KW-0469">Meiosis</keyword>
<keyword id="KW-0498">Mitosis</keyword>
<keyword id="KW-0539">Nucleus</keyword>
<keyword id="KW-1185">Reference proteome</keyword>
<sequence length="270" mass="30805">MDFTSSSGVLDSERNTGSNDSDEPSSHSDVIETEELKLIKLQEHKNNLLRQRSELLDQLSQTRVVEPRSVQLDDKLLLKLLRRNDNAVSDSSQSSNNPLPRVLPSLNIEQRKKYLDITLNDVTVTCEKDMILLRKGSFTASFRIAVENESIRSMAIDLNAFEVELQPIIQYAEDTQNVNVAMMAVVQFLRIKELHEQMISKIVEASKFIRASNNTITLNDLEVSFHCYWNLPSPYPETLILTNKVQKILDFLIYQYGIQLGVIKYGSTII</sequence>
<evidence type="ECO:0000250" key="1">
    <source>
        <dbReference type="UniProtKB" id="Q02732"/>
    </source>
</evidence>
<evidence type="ECO:0000255" key="2"/>
<evidence type="ECO:0000256" key="3">
    <source>
        <dbReference type="SAM" id="MobiDB-lite"/>
    </source>
</evidence>
<evidence type="ECO:0000269" key="4">
    <source>
    </source>
</evidence>
<evidence type="ECO:0000269" key="5">
    <source>
    </source>
</evidence>
<evidence type="ECO:0000305" key="6"/>
<evidence type="ECO:0007829" key="7">
    <source>
        <dbReference type="PDB" id="5MU3"/>
    </source>
</evidence>
<gene>
    <name type="primary">CTF19</name>
    <name type="ordered locus">KLLA0D07612g</name>
</gene>
<feature type="chain" id="PRO_0000417588" description="Inner kinetochore subunit CTF19">
    <location>
        <begin position="1"/>
        <end position="270"/>
    </location>
</feature>
<feature type="region of interest" description="Disordered" evidence="3">
    <location>
        <begin position="1"/>
        <end position="30"/>
    </location>
</feature>
<feature type="region of interest" description="D-RWD">
    <location>
        <begin position="107"/>
        <end position="270"/>
    </location>
</feature>
<feature type="coiled-coil region" evidence="2">
    <location>
        <begin position="31"/>
        <end position="63"/>
    </location>
</feature>
<feature type="compositionally biased region" description="Polar residues" evidence="3">
    <location>
        <begin position="1"/>
        <end position="19"/>
    </location>
</feature>
<feature type="helix" evidence="7">
    <location>
        <begin position="108"/>
        <end position="119"/>
    </location>
</feature>
<feature type="strand" evidence="7">
    <location>
        <begin position="123"/>
        <end position="127"/>
    </location>
</feature>
<feature type="strand" evidence="7">
    <location>
        <begin position="130"/>
        <end position="135"/>
    </location>
</feature>
<feature type="strand" evidence="7">
    <location>
        <begin position="138"/>
        <end position="147"/>
    </location>
</feature>
<feature type="strand" evidence="7">
    <location>
        <begin position="150"/>
        <end position="160"/>
    </location>
</feature>
<feature type="helix" evidence="7">
    <location>
        <begin position="162"/>
        <end position="175"/>
    </location>
</feature>
<feature type="helix" evidence="7">
    <location>
        <begin position="178"/>
        <end position="205"/>
    </location>
</feature>
<feature type="strand" evidence="7">
    <location>
        <begin position="212"/>
        <end position="218"/>
    </location>
</feature>
<feature type="strand" evidence="7">
    <location>
        <begin position="221"/>
        <end position="228"/>
    </location>
</feature>
<feature type="strand" evidence="7">
    <location>
        <begin position="237"/>
        <end position="244"/>
    </location>
</feature>
<feature type="helix" evidence="7">
    <location>
        <begin position="246"/>
        <end position="256"/>
    </location>
</feature>
<feature type="helix" evidence="7">
    <location>
        <begin position="258"/>
        <end position="267"/>
    </location>
</feature>
<organism>
    <name type="scientific">Kluyveromyces lactis (strain ATCC 8585 / CBS 2359 / DSM 70799 / NBRC 1267 / NRRL Y-1140 / WM37)</name>
    <name type="common">Yeast</name>
    <name type="synonym">Candida sphaerica</name>
    <dbReference type="NCBI Taxonomy" id="284590"/>
    <lineage>
        <taxon>Eukaryota</taxon>
        <taxon>Fungi</taxon>
        <taxon>Dikarya</taxon>
        <taxon>Ascomycota</taxon>
        <taxon>Saccharomycotina</taxon>
        <taxon>Saccharomycetes</taxon>
        <taxon>Saccharomycetales</taxon>
        <taxon>Saccharomycetaceae</taxon>
        <taxon>Kluyveromyces</taxon>
    </lineage>
</organism>
<proteinExistence type="evidence at protein level"/>
<dbReference type="EMBL" id="CR382124">
    <property type="protein sequence ID" value="CAH00498.1"/>
    <property type="molecule type" value="Genomic_DNA"/>
</dbReference>
<dbReference type="RefSeq" id="XP_453402.1">
    <property type="nucleotide sequence ID" value="XM_453402.1"/>
</dbReference>
<dbReference type="PDB" id="3ZXU">
    <property type="method" value="X-ray"/>
    <property type="resolution" value="3.90 A"/>
    <property type="chains" value="B/D=1-270"/>
</dbReference>
<dbReference type="PDB" id="5MU3">
    <property type="method" value="X-ray"/>
    <property type="resolution" value="2.10 A"/>
    <property type="chains" value="B/E=106-270"/>
</dbReference>
<dbReference type="PDBsum" id="3ZXU"/>
<dbReference type="PDBsum" id="5MU3"/>
<dbReference type="SMR" id="Q6CRN7"/>
<dbReference type="IntAct" id="Q6CRN7">
    <property type="interactions" value="1"/>
</dbReference>
<dbReference type="MINT" id="Q6CRN7"/>
<dbReference type="STRING" id="284590.Q6CRN7"/>
<dbReference type="PaxDb" id="284590-Q6CRN7"/>
<dbReference type="KEGG" id="kla:KLLA0_D07612g"/>
<dbReference type="HOGENOM" id="CLU_1030821_0_0_1"/>
<dbReference type="InParanoid" id="Q6CRN7"/>
<dbReference type="Proteomes" id="UP000000598">
    <property type="component" value="Chromosome D"/>
</dbReference>
<dbReference type="GO" id="GO:0000776">
    <property type="term" value="C:kinetochore"/>
    <property type="evidence" value="ECO:0007669"/>
    <property type="project" value="UniProtKB-KW"/>
</dbReference>
<dbReference type="GO" id="GO:0005634">
    <property type="term" value="C:nucleus"/>
    <property type="evidence" value="ECO:0007669"/>
    <property type="project" value="UniProtKB-SubCell"/>
</dbReference>
<dbReference type="GO" id="GO:0051301">
    <property type="term" value="P:cell division"/>
    <property type="evidence" value="ECO:0007669"/>
    <property type="project" value="UniProtKB-KW"/>
</dbReference>
<dbReference type="GO" id="GO:0051321">
    <property type="term" value="P:meiotic cell cycle"/>
    <property type="evidence" value="ECO:0007669"/>
    <property type="project" value="UniProtKB-KW"/>
</dbReference>
<dbReference type="CDD" id="cd23788">
    <property type="entry name" value="DRWD-C_KlCTF19"/>
    <property type="match status" value="1"/>
</dbReference>
<dbReference type="CDD" id="cd23789">
    <property type="entry name" value="DRWD-N_KlCTF19"/>
    <property type="match status" value="1"/>
</dbReference>
<dbReference type="Gene3D" id="3.40.50.12050">
    <property type="match status" value="1"/>
</dbReference>
<dbReference type="Pfam" id="PF22463">
    <property type="entry name" value="Ctf19_RWD1"/>
    <property type="match status" value="1"/>
</dbReference>
<dbReference type="Pfam" id="PF22462">
    <property type="entry name" value="Ctf19_RWD2"/>
    <property type="match status" value="1"/>
</dbReference>
<accession>Q6CRN7</accession>
<protein>
    <recommendedName>
        <fullName>Inner kinetochore subunit CTF19</fullName>
    </recommendedName>
    <alternativeName>
        <fullName>CENP-P homolog</fullName>
    </alternativeName>
    <alternativeName>
        <fullName>Constitutive centromere-associated network protein CTF19</fullName>
    </alternativeName>
</protein>
<name>CENPP_KLULA</name>
<reference key="1">
    <citation type="journal article" date="2004" name="Nature">
        <title>Genome evolution in yeasts.</title>
        <authorList>
            <person name="Dujon B."/>
            <person name="Sherman D."/>
            <person name="Fischer G."/>
            <person name="Durrens P."/>
            <person name="Casaregola S."/>
            <person name="Lafontaine I."/>
            <person name="de Montigny J."/>
            <person name="Marck C."/>
            <person name="Neuveglise C."/>
            <person name="Talla E."/>
            <person name="Goffard N."/>
            <person name="Frangeul L."/>
            <person name="Aigle M."/>
            <person name="Anthouard V."/>
            <person name="Babour A."/>
            <person name="Barbe V."/>
            <person name="Barnay S."/>
            <person name="Blanchin S."/>
            <person name="Beckerich J.-M."/>
            <person name="Beyne E."/>
            <person name="Bleykasten C."/>
            <person name="Boisrame A."/>
            <person name="Boyer J."/>
            <person name="Cattolico L."/>
            <person name="Confanioleri F."/>
            <person name="de Daruvar A."/>
            <person name="Despons L."/>
            <person name="Fabre E."/>
            <person name="Fairhead C."/>
            <person name="Ferry-Dumazet H."/>
            <person name="Groppi A."/>
            <person name="Hantraye F."/>
            <person name="Hennequin C."/>
            <person name="Jauniaux N."/>
            <person name="Joyet P."/>
            <person name="Kachouri R."/>
            <person name="Kerrest A."/>
            <person name="Koszul R."/>
            <person name="Lemaire M."/>
            <person name="Lesur I."/>
            <person name="Ma L."/>
            <person name="Muller H."/>
            <person name="Nicaud J.-M."/>
            <person name="Nikolski M."/>
            <person name="Oztas S."/>
            <person name="Ozier-Kalogeropoulos O."/>
            <person name="Pellenz S."/>
            <person name="Potier S."/>
            <person name="Richard G.-F."/>
            <person name="Straub M.-L."/>
            <person name="Suleau A."/>
            <person name="Swennen D."/>
            <person name="Tekaia F."/>
            <person name="Wesolowski-Louvel M."/>
            <person name="Westhof E."/>
            <person name="Wirth B."/>
            <person name="Zeniou-Meyer M."/>
            <person name="Zivanovic Y."/>
            <person name="Bolotin-Fukuhara M."/>
            <person name="Thierry A."/>
            <person name="Bouchier C."/>
            <person name="Caudron B."/>
            <person name="Scarpelli C."/>
            <person name="Gaillardin C."/>
            <person name="Weissenbach J."/>
            <person name="Wincker P."/>
            <person name="Souciet J.-L."/>
        </authorList>
    </citation>
    <scope>NUCLEOTIDE SEQUENCE [LARGE SCALE GENOMIC DNA]</scope>
    <source>
        <strain>ATCC 8585 / CBS 2359 / DSM 70799 / NBRC 1267 / NRRL Y-1140 / WM37</strain>
    </source>
</reference>
<reference key="2">
    <citation type="journal article" date="2012" name="EMBO Rep.">
        <title>RWD domain: a recurring module in kinetochore architecture shown by a Ctf19-Mcm21 complex structure.</title>
        <authorList>
            <person name="Schmitzberger F."/>
            <person name="Harrison S.C."/>
        </authorList>
    </citation>
    <scope>X-RAY CRYSTALLOGRAPHY (3.7 ANGSTROMS) IN COMPLEX WITH MCM21</scope>
    <scope>DOMAIN</scope>
    <scope>INTERACTION WITH AME1 AND OKP1</scope>
</reference>
<reference key="3">
    <citation type="journal article" date="2017" name="EMBO J.">
        <title>Molecular basis for inner kinetochore configuration through RWD domain-peptide interactions.</title>
        <authorList>
            <person name="Schmitzberger F."/>
            <person name="Richter M.M."/>
            <person name="Gordiyenko Y."/>
            <person name="Robinson C.V."/>
            <person name="Dadlez M."/>
            <person name="Westermann S."/>
        </authorList>
    </citation>
    <scope>X-RAY CRYSTALLOGRAPHY (2.10 ANGSTROMS) OF 106-270 IN COMPLEX WITH MCM21 AND OKP1</scope>
    <scope>SUBUNIT</scope>
</reference>